<dbReference type="EC" id="3.1.11.6" evidence="1"/>
<dbReference type="EMBL" id="CP000668">
    <property type="protein sequence ID" value="ABP40592.1"/>
    <property type="molecule type" value="Genomic_DNA"/>
</dbReference>
<dbReference type="RefSeq" id="WP_002209810.1">
    <property type="nucleotide sequence ID" value="NZ_CP009715.1"/>
</dbReference>
<dbReference type="SMR" id="A4TMT0"/>
<dbReference type="GeneID" id="57975829"/>
<dbReference type="KEGG" id="ypp:YPDSF_2217"/>
<dbReference type="PATRIC" id="fig|386656.14.peg.3705"/>
<dbReference type="GO" id="GO:0005737">
    <property type="term" value="C:cytoplasm"/>
    <property type="evidence" value="ECO:0007669"/>
    <property type="project" value="UniProtKB-SubCell"/>
</dbReference>
<dbReference type="GO" id="GO:0009318">
    <property type="term" value="C:exodeoxyribonuclease VII complex"/>
    <property type="evidence" value="ECO:0007669"/>
    <property type="project" value="InterPro"/>
</dbReference>
<dbReference type="GO" id="GO:0008855">
    <property type="term" value="F:exodeoxyribonuclease VII activity"/>
    <property type="evidence" value="ECO:0007669"/>
    <property type="project" value="UniProtKB-UniRule"/>
</dbReference>
<dbReference type="GO" id="GO:0003676">
    <property type="term" value="F:nucleic acid binding"/>
    <property type="evidence" value="ECO:0007669"/>
    <property type="project" value="InterPro"/>
</dbReference>
<dbReference type="GO" id="GO:0006308">
    <property type="term" value="P:DNA catabolic process"/>
    <property type="evidence" value="ECO:0007669"/>
    <property type="project" value="UniProtKB-UniRule"/>
</dbReference>
<dbReference type="CDD" id="cd04489">
    <property type="entry name" value="ExoVII_LU_OBF"/>
    <property type="match status" value="1"/>
</dbReference>
<dbReference type="HAMAP" id="MF_00378">
    <property type="entry name" value="Exonuc_7_L"/>
    <property type="match status" value="1"/>
</dbReference>
<dbReference type="InterPro" id="IPR003753">
    <property type="entry name" value="Exonuc_VII_L"/>
</dbReference>
<dbReference type="InterPro" id="IPR020579">
    <property type="entry name" value="Exonuc_VII_lsu_C"/>
</dbReference>
<dbReference type="InterPro" id="IPR025824">
    <property type="entry name" value="OB-fold_nuc-bd_dom"/>
</dbReference>
<dbReference type="NCBIfam" id="TIGR00237">
    <property type="entry name" value="xseA"/>
    <property type="match status" value="1"/>
</dbReference>
<dbReference type="PANTHER" id="PTHR30008">
    <property type="entry name" value="EXODEOXYRIBONUCLEASE 7 LARGE SUBUNIT"/>
    <property type="match status" value="1"/>
</dbReference>
<dbReference type="PANTHER" id="PTHR30008:SF0">
    <property type="entry name" value="EXODEOXYRIBONUCLEASE 7 LARGE SUBUNIT"/>
    <property type="match status" value="1"/>
</dbReference>
<dbReference type="Pfam" id="PF02601">
    <property type="entry name" value="Exonuc_VII_L"/>
    <property type="match status" value="1"/>
</dbReference>
<dbReference type="Pfam" id="PF13742">
    <property type="entry name" value="tRNA_anti_2"/>
    <property type="match status" value="1"/>
</dbReference>
<feature type="chain" id="PRO_0000303835" description="Exodeoxyribonuclease 7 large subunit">
    <location>
        <begin position="1"/>
        <end position="459"/>
    </location>
</feature>
<keyword id="KW-0963">Cytoplasm</keyword>
<keyword id="KW-0269">Exonuclease</keyword>
<keyword id="KW-0378">Hydrolase</keyword>
<keyword id="KW-0540">Nuclease</keyword>
<evidence type="ECO:0000255" key="1">
    <source>
        <dbReference type="HAMAP-Rule" id="MF_00378"/>
    </source>
</evidence>
<name>EX7L_YERPP</name>
<sequence>MSQSSASSIFTVSRLNQTVRELLEREMGQIWLTAEISNFSQPASGHWYFTLKDDRAQVRCAMFRNSNRRTTFRPQNGQQVLVRASITLYEPRGDYQLIAESMQPAGDGLLQQQFEQLKQQLAAEGLFDQSHKQPLPHPAKQVGVITSASGAALHDVLHVLQRRDPSLPVIIYPTSVQGVDAPLQIVRAIQLANLRAECDVLIVGRGGGSLEDLWSFNDERVARAIFNSHIPIVSAVGHETDVTIADFVADLRAPTPSAAAELVSRNQIELVRQIQGQQQRMEMAMDYYLAQRNQQFTRLEHRLQQQHPHLRLARQQTLLLKLQRRLEESAQTQIRLLSKRTERLQQRLQQVQPQGQIHRYNQRVQQQEYRLRQAVERQLNGYRQRFGIACSQLEAVSPLATLARGYSVTQTPAGALLKTTKQVQAGDKLTTRLQDGWVESEITQVTVAKKSRQKKVVTQ</sequence>
<comment type="function">
    <text evidence="1">Bidirectionally degrades single-stranded DNA into large acid-insoluble oligonucleotides, which are then degraded further into small acid-soluble oligonucleotides.</text>
</comment>
<comment type="catalytic activity">
    <reaction evidence="1">
        <text>Exonucleolytic cleavage in either 5'- to 3'- or 3'- to 5'-direction to yield nucleoside 5'-phosphates.</text>
        <dbReference type="EC" id="3.1.11.6"/>
    </reaction>
</comment>
<comment type="subunit">
    <text evidence="1">Heterooligomer composed of large and small subunits.</text>
</comment>
<comment type="subcellular location">
    <subcellularLocation>
        <location evidence="1">Cytoplasm</location>
    </subcellularLocation>
</comment>
<comment type="similarity">
    <text evidence="1">Belongs to the XseA family.</text>
</comment>
<organism>
    <name type="scientific">Yersinia pestis (strain Pestoides F)</name>
    <dbReference type="NCBI Taxonomy" id="386656"/>
    <lineage>
        <taxon>Bacteria</taxon>
        <taxon>Pseudomonadati</taxon>
        <taxon>Pseudomonadota</taxon>
        <taxon>Gammaproteobacteria</taxon>
        <taxon>Enterobacterales</taxon>
        <taxon>Yersiniaceae</taxon>
        <taxon>Yersinia</taxon>
    </lineage>
</organism>
<gene>
    <name evidence="1" type="primary">xseA</name>
    <name type="ordered locus">YPDSF_2217</name>
</gene>
<reference key="1">
    <citation type="submission" date="2007-02" db="EMBL/GenBank/DDBJ databases">
        <title>Complete sequence of chromosome of Yersinia pestis Pestoides F.</title>
        <authorList>
            <consortium name="US DOE Joint Genome Institute"/>
            <person name="Copeland A."/>
            <person name="Lucas S."/>
            <person name="Lapidus A."/>
            <person name="Barry K."/>
            <person name="Detter J.C."/>
            <person name="Glavina del Rio T."/>
            <person name="Hammon N."/>
            <person name="Israni S."/>
            <person name="Dalin E."/>
            <person name="Tice H."/>
            <person name="Pitluck S."/>
            <person name="Di Bartolo G."/>
            <person name="Chain P."/>
            <person name="Malfatti S."/>
            <person name="Shin M."/>
            <person name="Vergez L."/>
            <person name="Schmutz J."/>
            <person name="Larimer F."/>
            <person name="Land M."/>
            <person name="Hauser L."/>
            <person name="Worsham P."/>
            <person name="Chu M."/>
            <person name="Bearden S."/>
            <person name="Garcia E."/>
            <person name="Richardson P."/>
        </authorList>
    </citation>
    <scope>NUCLEOTIDE SEQUENCE [LARGE SCALE GENOMIC DNA]</scope>
    <source>
        <strain>Pestoides F</strain>
    </source>
</reference>
<proteinExistence type="inferred from homology"/>
<protein>
    <recommendedName>
        <fullName evidence="1">Exodeoxyribonuclease 7 large subunit</fullName>
        <ecNumber evidence="1">3.1.11.6</ecNumber>
    </recommendedName>
    <alternativeName>
        <fullName evidence="1">Exodeoxyribonuclease VII large subunit</fullName>
        <shortName evidence="1">Exonuclease VII large subunit</shortName>
    </alternativeName>
</protein>
<accession>A4TMT0</accession>